<evidence type="ECO:0000255" key="1">
    <source>
        <dbReference type="HAMAP-Rule" id="MF_00154"/>
    </source>
</evidence>
<evidence type="ECO:0000305" key="2"/>
<organism>
    <name type="scientific">Staphylococcus aureus (strain Mu3 / ATCC 700698)</name>
    <dbReference type="NCBI Taxonomy" id="418127"/>
    <lineage>
        <taxon>Bacteria</taxon>
        <taxon>Bacillati</taxon>
        <taxon>Bacillota</taxon>
        <taxon>Bacilli</taxon>
        <taxon>Bacillales</taxon>
        <taxon>Staphylococcaceae</taxon>
        <taxon>Staphylococcus</taxon>
    </lineage>
</organism>
<name>COXX_STAA1</name>
<gene>
    <name evidence="1" type="primary">ctaB</name>
    <name type="ordered locus">SAHV_1108</name>
</gene>
<keyword id="KW-1003">Cell membrane</keyword>
<keyword id="KW-0350">Heme biosynthesis</keyword>
<keyword id="KW-0472">Membrane</keyword>
<keyword id="KW-0808">Transferase</keyword>
<keyword id="KW-0812">Transmembrane</keyword>
<keyword id="KW-1133">Transmembrane helix</keyword>
<reference key="1">
    <citation type="journal article" date="2008" name="Antimicrob. Agents Chemother.">
        <title>Mutated response regulator graR is responsible for phenotypic conversion of Staphylococcus aureus from heterogeneous vancomycin-intermediate resistance to vancomycin-intermediate resistance.</title>
        <authorList>
            <person name="Neoh H.-M."/>
            <person name="Cui L."/>
            <person name="Yuzawa H."/>
            <person name="Takeuchi F."/>
            <person name="Matsuo M."/>
            <person name="Hiramatsu K."/>
        </authorList>
    </citation>
    <scope>NUCLEOTIDE SEQUENCE [LARGE SCALE GENOMIC DNA]</scope>
    <source>
        <strain>Mu3 / ATCC 700698</strain>
    </source>
</reference>
<sequence length="303" mass="33859">MSKEHTLSQNISRVNFKELQQIIKMGLVQGNLIPAFAGAWLAVVMTNHSFLSSIPQILLMLFGSTLIMGGACALNNYYDQDIDRIMPSKQNRPTVNNRITDQNLLLLSFGMMLVGEICLFLLNIPSGVLGLMGIVGYVSYYSIWSKRHTTWNTVIGSFPGAVPPLIGWVAIEGQISLTAIALFLVVFCWQPIHFYALAIKRKDEYALANIPMLPSVKGFKRTRVSMFIWLIILLPVPLLLINLGVVFVVLATLLNLGWIALGLTTFKKNSDQTKWATQMFIYSLNYLVIFFVLAVIVSLLTLI</sequence>
<proteinExistence type="inferred from homology"/>
<comment type="function">
    <text evidence="1">Converts heme B (protoheme IX) to heme O by substitution of the vinyl group on carbon 2 of heme B porphyrin ring with a hydroxyethyl farnesyl side group.</text>
</comment>
<comment type="catalytic activity">
    <reaction evidence="1">
        <text>heme b + (2E,6E)-farnesyl diphosphate + H2O = Fe(II)-heme o + diphosphate</text>
        <dbReference type="Rhea" id="RHEA:28070"/>
        <dbReference type="ChEBI" id="CHEBI:15377"/>
        <dbReference type="ChEBI" id="CHEBI:33019"/>
        <dbReference type="ChEBI" id="CHEBI:60344"/>
        <dbReference type="ChEBI" id="CHEBI:60530"/>
        <dbReference type="ChEBI" id="CHEBI:175763"/>
        <dbReference type="EC" id="2.5.1.141"/>
    </reaction>
</comment>
<comment type="pathway">
    <text evidence="1">Porphyrin-containing compound metabolism; heme O biosynthesis; heme O from protoheme: step 1/1.</text>
</comment>
<comment type="subunit">
    <text evidence="1">Interacts with CtaA.</text>
</comment>
<comment type="subcellular location">
    <subcellularLocation>
        <location evidence="1">Cell membrane</location>
        <topology evidence="1">Multi-pass membrane protein</topology>
    </subcellularLocation>
</comment>
<comment type="miscellaneous">
    <text evidence="1">Carbon 2 of the heme B porphyrin ring is defined according to the Fischer nomenclature.</text>
</comment>
<comment type="similarity">
    <text evidence="1">Belongs to the UbiA prenyltransferase family. Protoheme IX farnesyltransferase subfamily.</text>
</comment>
<comment type="sequence caution" evidence="2">
    <conflict type="erroneous initiation">
        <sequence resource="EMBL-CDS" id="BAF77991"/>
    </conflict>
</comment>
<dbReference type="EC" id="2.5.1.141" evidence="1"/>
<dbReference type="EMBL" id="AP009324">
    <property type="protein sequence ID" value="BAF77991.1"/>
    <property type="status" value="ALT_INIT"/>
    <property type="molecule type" value="Genomic_DNA"/>
</dbReference>
<dbReference type="SMR" id="A7X128"/>
<dbReference type="KEGG" id="saw:SAHV_1108"/>
<dbReference type="HOGENOM" id="CLU_029631_0_0_9"/>
<dbReference type="UniPathway" id="UPA00834">
    <property type="reaction ID" value="UER00712"/>
</dbReference>
<dbReference type="GO" id="GO:0005886">
    <property type="term" value="C:plasma membrane"/>
    <property type="evidence" value="ECO:0007669"/>
    <property type="project" value="UniProtKB-SubCell"/>
</dbReference>
<dbReference type="GO" id="GO:0008495">
    <property type="term" value="F:protoheme IX farnesyltransferase activity"/>
    <property type="evidence" value="ECO:0007669"/>
    <property type="project" value="UniProtKB-UniRule"/>
</dbReference>
<dbReference type="GO" id="GO:0048034">
    <property type="term" value="P:heme O biosynthetic process"/>
    <property type="evidence" value="ECO:0007669"/>
    <property type="project" value="UniProtKB-UniRule"/>
</dbReference>
<dbReference type="CDD" id="cd13957">
    <property type="entry name" value="PT_UbiA_Cox10"/>
    <property type="match status" value="1"/>
</dbReference>
<dbReference type="Gene3D" id="1.10.357.140">
    <property type="entry name" value="UbiA prenyltransferase"/>
    <property type="match status" value="1"/>
</dbReference>
<dbReference type="HAMAP" id="MF_00154">
    <property type="entry name" value="CyoE_CtaB"/>
    <property type="match status" value="1"/>
</dbReference>
<dbReference type="InterPro" id="IPR006369">
    <property type="entry name" value="Protohaem_IX_farnesylTrfase"/>
</dbReference>
<dbReference type="InterPro" id="IPR000537">
    <property type="entry name" value="UbiA_prenyltransferase"/>
</dbReference>
<dbReference type="InterPro" id="IPR044878">
    <property type="entry name" value="UbiA_sf"/>
</dbReference>
<dbReference type="NCBIfam" id="TIGR01473">
    <property type="entry name" value="cyoE_ctaB"/>
    <property type="match status" value="1"/>
</dbReference>
<dbReference type="PANTHER" id="PTHR43448">
    <property type="entry name" value="PROTOHEME IX FARNESYLTRANSFERASE, MITOCHONDRIAL"/>
    <property type="match status" value="1"/>
</dbReference>
<dbReference type="PANTHER" id="PTHR43448:SF2">
    <property type="entry name" value="PROTOHEME IX FARNESYLTRANSFERASE, MITOCHONDRIAL"/>
    <property type="match status" value="1"/>
</dbReference>
<dbReference type="Pfam" id="PF01040">
    <property type="entry name" value="UbiA"/>
    <property type="match status" value="1"/>
</dbReference>
<accession>A7X128</accession>
<feature type="chain" id="PRO_0000327158" description="Protoheme IX farnesyltransferase">
    <location>
        <begin position="1"/>
        <end position="303"/>
    </location>
</feature>
<feature type="transmembrane region" description="Helical" evidence="1">
    <location>
        <begin position="25"/>
        <end position="45"/>
    </location>
</feature>
<feature type="transmembrane region" description="Helical" evidence="1">
    <location>
        <begin position="54"/>
        <end position="74"/>
    </location>
</feature>
<feature type="transmembrane region" description="Helical" evidence="1">
    <location>
        <begin position="104"/>
        <end position="124"/>
    </location>
</feature>
<feature type="transmembrane region" description="Helical" evidence="1">
    <location>
        <begin position="125"/>
        <end position="145"/>
    </location>
</feature>
<feature type="transmembrane region" description="Helical" evidence="1">
    <location>
        <begin position="151"/>
        <end position="171"/>
    </location>
</feature>
<feature type="transmembrane region" description="Helical" evidence="1">
    <location>
        <begin position="179"/>
        <end position="199"/>
    </location>
</feature>
<feature type="transmembrane region" description="Helical" evidence="1">
    <location>
        <begin position="227"/>
        <end position="247"/>
    </location>
</feature>
<feature type="transmembrane region" description="Helical" evidence="1">
    <location>
        <begin position="248"/>
        <end position="268"/>
    </location>
</feature>
<feature type="transmembrane region" description="Helical" evidence="1">
    <location>
        <begin position="280"/>
        <end position="300"/>
    </location>
</feature>
<protein>
    <recommendedName>
        <fullName evidence="1">Protoheme IX farnesyltransferase</fullName>
        <ecNumber evidence="1">2.5.1.141</ecNumber>
    </recommendedName>
    <alternativeName>
        <fullName evidence="1">Heme B farnesyltransferase</fullName>
    </alternativeName>
    <alternativeName>
        <fullName evidence="1">Heme O synthase</fullName>
    </alternativeName>
</protein>